<feature type="signal peptide" evidence="2">
    <location>
        <begin position="1"/>
        <end position="31"/>
    </location>
</feature>
<feature type="chain" id="PRO_0000008009" description="Xylanase/beta-glucanase">
    <location>
        <begin position="32"/>
        <end position="802"/>
    </location>
</feature>
<feature type="domain" description="GH11" evidence="3">
    <location>
        <begin position="32"/>
        <end position="239"/>
    </location>
</feature>
<feature type="domain" description="CBM-cenC">
    <location>
        <begin position="258"/>
        <end position="404"/>
    </location>
</feature>
<feature type="domain" description="Dockerin" evidence="5">
    <location>
        <begin position="434"/>
        <end position="513"/>
    </location>
</feature>
<feature type="domain" description="GH16" evidence="4">
    <location>
        <begin position="556"/>
        <end position="792"/>
    </location>
</feature>
<feature type="region of interest" description="B">
    <location>
        <begin position="245"/>
        <end position="523"/>
    </location>
</feature>
<feature type="region of interest" description="Disordered" evidence="8">
    <location>
        <begin position="414"/>
        <end position="436"/>
    </location>
</feature>
<feature type="region of interest" description="Linker">
    <location>
        <begin position="524"/>
        <end position="555"/>
    </location>
</feature>
<feature type="region of interest" description="Disordered" evidence="8">
    <location>
        <begin position="533"/>
        <end position="564"/>
    </location>
</feature>
<feature type="compositionally biased region" description="Low complexity" evidence="8">
    <location>
        <begin position="419"/>
        <end position="436"/>
    </location>
</feature>
<feature type="compositionally biased region" description="Low complexity" evidence="8">
    <location>
        <begin position="533"/>
        <end position="553"/>
    </location>
</feature>
<feature type="active site" description="Nucleophile" evidence="1">
    <location>
        <position position="124"/>
    </location>
</feature>
<feature type="active site" description="Proton donor" evidence="6 7">
    <location>
        <position position="226"/>
    </location>
</feature>
<feature type="active site" description="Nucleophile" evidence="1">
    <location>
        <position position="684"/>
    </location>
</feature>
<proteinExistence type="inferred from homology"/>
<sequence>MKKSIFKRYAAAVGLMASVLMFTAVPTTSNAADDQKTGKVGGFDWEMWNQNYTGTVSMNPGAGSFTCSWSGIENFLARMGKNYDDQKKNYKAFGDIVLTYDVEYTPRGNSYMCIYGWTRNPLMEYYIVEGWGDWEPPGNDGVDNFGTTTIDGKTYKIRKSMRYNQPSIEGTKTFPQYWSVRTTSGSRNNTTNYMKDQVSVTKHFDAWSKAGLDMSGTLYEVSLNIEGYRSNGSANVKSISFDGGIDIPDPEPIKPDENGYYLKENFESGEGNWSGRGSAKVKSSSGYDGTKGIFVSGREDTWNGASINLDELTFKAGETYSLGTAVMQDFESSVDFKLTLQYTDADGKENYDEVKTVTAAKGQWVDLSNSSYTIPSGATGLVLYVEVPESKTDFYMDGAYAGVKGTKPLISISSQSVDPPVTEPTNPTNPTGPSVTKWGDANCDGGVDLSDAIFIMQFLANPNKYGLTGTETNHMTNQGKVNGDVCEHGSGLTEDDAVSIQKYLIRAISELPESYLEGHDPSKTTTTTTRITTTTTTTTTTTTSKTTTTTTTTSPAMHGGYRDLGTPMNTSATMISDFRTGKAGDFFASDGWTNGKPFDCWWYKRNAVINDGCLQLSIDQKWTNDKNPDWDPRYSGGEFRTNNFYHYGYYECSMQAMKNDGVVSSFFTYTGPSDDNPWDEIDIEILGKNTTQVQFNYYTNGQGKHEKLYDLGFDSSEAYHTYGFDWQPNYIAWYVDGREVYRATQDIPKTPGKIMMNAWPGLTVDDWLKAFNGRTPLTAHYQWVTYNKNGVQHSSQGQNPWG</sequence>
<reference key="1">
    <citation type="journal article" date="1993" name="J. Bacteriol.">
        <title>A bifunctional enzyme, with separate xylanase and beta(1,3-1,4)-glucanase domains, encoded by the xynD gene of Ruminococcus flavefaciens.</title>
        <authorList>
            <person name="Flint H.J."/>
            <person name="Martin J."/>
            <person name="McPherson C.A."/>
            <person name="Daniel A.S."/>
            <person name="Zhang J.-X."/>
        </authorList>
    </citation>
    <scope>NUCLEOTIDE SEQUENCE [GENOMIC DNA]</scope>
    <source>
        <strain>17</strain>
    </source>
</reference>
<organism>
    <name type="scientific">Ruminococcus flavefaciens</name>
    <dbReference type="NCBI Taxonomy" id="1265"/>
    <lineage>
        <taxon>Bacteria</taxon>
        <taxon>Bacillati</taxon>
        <taxon>Bacillota</taxon>
        <taxon>Clostridia</taxon>
        <taxon>Eubacteriales</taxon>
        <taxon>Oscillospiraceae</taxon>
        <taxon>Ruminococcus</taxon>
    </lineage>
</organism>
<gene>
    <name type="primary">xynD</name>
</gene>
<accession>Q53317</accession>
<evidence type="ECO:0000250" key="1"/>
<evidence type="ECO:0000255" key="2"/>
<evidence type="ECO:0000255" key="3">
    <source>
        <dbReference type="PROSITE-ProRule" id="PRU01097"/>
    </source>
</evidence>
<evidence type="ECO:0000255" key="4">
    <source>
        <dbReference type="PROSITE-ProRule" id="PRU01098"/>
    </source>
</evidence>
<evidence type="ECO:0000255" key="5">
    <source>
        <dbReference type="PROSITE-ProRule" id="PRU01102"/>
    </source>
</evidence>
<evidence type="ECO:0000255" key="6">
    <source>
        <dbReference type="PROSITE-ProRule" id="PRU10063"/>
    </source>
</evidence>
<evidence type="ECO:0000255" key="7">
    <source>
        <dbReference type="PROSITE-ProRule" id="PRU10064"/>
    </source>
</evidence>
<evidence type="ECO:0000256" key="8">
    <source>
        <dbReference type="SAM" id="MobiDB-lite"/>
    </source>
</evidence>
<evidence type="ECO:0000305" key="9"/>
<protein>
    <recommendedName>
        <fullName>Xylanase/beta-glucanase</fullName>
    </recommendedName>
    <domain>
        <recommendedName>
            <fullName>Endo-1,4-beta-xylanase</fullName>
            <shortName>Xylanase</shortName>
            <ecNumber>3.2.1.8</ecNumber>
        </recommendedName>
    </domain>
    <domain>
        <recommendedName>
            <fullName>Endo-beta-1,3-1,4 glucanase</fullName>
            <ecNumber>3.2.1.73</ecNumber>
        </recommendedName>
        <alternativeName>
            <fullName>1,3-1,4-beta-D-glucan 4-glucanohydrolase</fullName>
        </alternativeName>
        <alternativeName>
            <fullName>Lichenase</fullName>
        </alternativeName>
    </domain>
</protein>
<name>XYND_RUMFL</name>
<dbReference type="EC" id="3.2.1.8"/>
<dbReference type="EC" id="3.2.1.73"/>
<dbReference type="EMBL" id="S61204">
    <property type="protein sequence ID" value="AAB26620.1"/>
    <property type="molecule type" value="Genomic_DNA"/>
</dbReference>
<dbReference type="SMR" id="Q53317"/>
<dbReference type="STRING" id="1265.SAMN02910280_1302"/>
<dbReference type="CAZy" id="CBM22">
    <property type="family name" value="Carbohydrate-Binding Module Family 22"/>
</dbReference>
<dbReference type="CAZy" id="GH11">
    <property type="family name" value="Glycoside Hydrolase Family 11"/>
</dbReference>
<dbReference type="CAZy" id="GH16">
    <property type="family name" value="Glycoside Hydrolase Family 16"/>
</dbReference>
<dbReference type="UniPathway" id="UPA00114"/>
<dbReference type="GO" id="GO:0031176">
    <property type="term" value="F:endo-1,4-beta-xylanase activity"/>
    <property type="evidence" value="ECO:0007669"/>
    <property type="project" value="UniProtKB-EC"/>
</dbReference>
<dbReference type="GO" id="GO:0042972">
    <property type="term" value="F:licheninase activity"/>
    <property type="evidence" value="ECO:0007669"/>
    <property type="project" value="UniProtKB-EC"/>
</dbReference>
<dbReference type="GO" id="GO:0045493">
    <property type="term" value="P:xylan catabolic process"/>
    <property type="evidence" value="ECO:0007669"/>
    <property type="project" value="UniProtKB-UniPathway"/>
</dbReference>
<dbReference type="CDD" id="cd02175">
    <property type="entry name" value="GH16_lichenase"/>
    <property type="match status" value="1"/>
</dbReference>
<dbReference type="Gene3D" id="2.60.120.180">
    <property type="match status" value="1"/>
</dbReference>
<dbReference type="Gene3D" id="2.60.120.200">
    <property type="match status" value="1"/>
</dbReference>
<dbReference type="Gene3D" id="1.10.1330.10">
    <property type="entry name" value="Dockerin domain"/>
    <property type="match status" value="1"/>
</dbReference>
<dbReference type="Gene3D" id="2.60.120.260">
    <property type="entry name" value="Galactose-binding domain-like"/>
    <property type="match status" value="1"/>
</dbReference>
<dbReference type="InterPro" id="IPR008264">
    <property type="entry name" value="Beta_glucanase"/>
</dbReference>
<dbReference type="InterPro" id="IPR003305">
    <property type="entry name" value="CenC_carb-bd"/>
</dbReference>
<dbReference type="InterPro" id="IPR013320">
    <property type="entry name" value="ConA-like_dom_sf"/>
</dbReference>
<dbReference type="InterPro" id="IPR016134">
    <property type="entry name" value="Dockerin_dom"/>
</dbReference>
<dbReference type="InterPro" id="IPR036439">
    <property type="entry name" value="Dockerin_dom_sf"/>
</dbReference>
<dbReference type="InterPro" id="IPR008979">
    <property type="entry name" value="Galactose-bd-like_sf"/>
</dbReference>
<dbReference type="InterPro" id="IPR013319">
    <property type="entry name" value="GH11/12"/>
</dbReference>
<dbReference type="InterPro" id="IPR018208">
    <property type="entry name" value="GH11_AS_1"/>
</dbReference>
<dbReference type="InterPro" id="IPR033119">
    <property type="entry name" value="GH11_AS_2"/>
</dbReference>
<dbReference type="InterPro" id="IPR033123">
    <property type="entry name" value="GH11_dom"/>
</dbReference>
<dbReference type="InterPro" id="IPR000757">
    <property type="entry name" value="GH16"/>
</dbReference>
<dbReference type="InterPro" id="IPR008263">
    <property type="entry name" value="GH16_AS"/>
</dbReference>
<dbReference type="InterPro" id="IPR001137">
    <property type="entry name" value="Glyco_hydro_11"/>
</dbReference>
<dbReference type="NCBIfam" id="NF047856">
    <property type="entry name" value="BGlucanaseBglS"/>
    <property type="match status" value="1"/>
</dbReference>
<dbReference type="PANTHER" id="PTHR46828">
    <property type="entry name" value="ENDO-1,4-BETA-XYLANASE A-RELATED"/>
    <property type="match status" value="1"/>
</dbReference>
<dbReference type="PANTHER" id="PTHR46828:SF2">
    <property type="entry name" value="ENDO-1,4-BETA-XYLANASE A-RELATED"/>
    <property type="match status" value="1"/>
</dbReference>
<dbReference type="Pfam" id="PF02018">
    <property type="entry name" value="CBM_4_9"/>
    <property type="match status" value="1"/>
</dbReference>
<dbReference type="Pfam" id="PF00457">
    <property type="entry name" value="Glyco_hydro_11"/>
    <property type="match status" value="1"/>
</dbReference>
<dbReference type="Pfam" id="PF00722">
    <property type="entry name" value="Glyco_hydro_16"/>
    <property type="match status" value="1"/>
</dbReference>
<dbReference type="PRINTS" id="PR00737">
    <property type="entry name" value="GLHYDRLASE16"/>
</dbReference>
<dbReference type="SUPFAM" id="SSF49899">
    <property type="entry name" value="Concanavalin A-like lectins/glucanases"/>
    <property type="match status" value="2"/>
</dbReference>
<dbReference type="SUPFAM" id="SSF49785">
    <property type="entry name" value="Galactose-binding domain-like"/>
    <property type="match status" value="1"/>
</dbReference>
<dbReference type="SUPFAM" id="SSF63446">
    <property type="entry name" value="Type I dockerin domain"/>
    <property type="match status" value="1"/>
</dbReference>
<dbReference type="PROSITE" id="PS51766">
    <property type="entry name" value="DOCKERIN"/>
    <property type="match status" value="1"/>
</dbReference>
<dbReference type="PROSITE" id="PS00776">
    <property type="entry name" value="GH11_1"/>
    <property type="match status" value="1"/>
</dbReference>
<dbReference type="PROSITE" id="PS00777">
    <property type="entry name" value="GH11_2"/>
    <property type="match status" value="1"/>
</dbReference>
<dbReference type="PROSITE" id="PS51761">
    <property type="entry name" value="GH11_3"/>
    <property type="match status" value="1"/>
</dbReference>
<dbReference type="PROSITE" id="PS01034">
    <property type="entry name" value="GH16_1"/>
    <property type="match status" value="1"/>
</dbReference>
<dbReference type="PROSITE" id="PS51762">
    <property type="entry name" value="GH16_2"/>
    <property type="match status" value="1"/>
</dbReference>
<keyword id="KW-0119">Carbohydrate metabolism</keyword>
<keyword id="KW-0326">Glycosidase</keyword>
<keyword id="KW-0378">Hydrolase</keyword>
<keyword id="KW-0511">Multifunctional enzyme</keyword>
<keyword id="KW-0624">Polysaccharide degradation</keyword>
<keyword id="KW-0732">Signal</keyword>
<keyword id="KW-0858">Xylan degradation</keyword>
<comment type="function">
    <text>Contains two catalytic domains with xylanase and endo-beta-1,3-1,4 glucanase activities.</text>
</comment>
<comment type="catalytic activity">
    <reaction>
        <text>Endohydrolysis of (1-&gt;4)-beta-D-xylosidic linkages in xylans.</text>
        <dbReference type="EC" id="3.2.1.8"/>
    </reaction>
</comment>
<comment type="catalytic activity">
    <reaction>
        <text>Hydrolysis of (1-&gt;4)-beta-D-glucosidic linkages in beta-D-glucans containing (1-&gt;3)- and (1-&gt;4)-bonds.</text>
        <dbReference type="EC" id="3.2.1.73"/>
    </reaction>
</comment>
<comment type="pathway">
    <text>Glycan degradation; xylan degradation.</text>
</comment>
<comment type="similarity">
    <text evidence="9">In the N-terminal section; belongs to the glycosyl hydrolase 11 (cellulase G) family.</text>
</comment>
<comment type="similarity">
    <text evidence="9">In the C-terminal section; belongs to the glycosyl hydrolase 16 family.</text>
</comment>